<protein>
    <recommendedName>
        <fullName evidence="2">Large ribosomal subunit protein bL9c</fullName>
    </recommendedName>
    <alternativeName>
        <fullName>50S ribosomal protein L9, chloroplastic</fullName>
    </alternativeName>
    <alternativeName>
        <fullName>CL9</fullName>
    </alternativeName>
</protein>
<name>RK9_PEA</name>
<accession>P11894</accession>
<feature type="transit peptide" description="Chloroplast" evidence="1">
    <location>
        <begin position="1"/>
        <end position="39"/>
    </location>
</feature>
<feature type="chain" id="PRO_0000030549" description="Large ribosomal subunit protein bL9c">
    <location>
        <begin position="40"/>
        <end position="194"/>
    </location>
</feature>
<dbReference type="EMBL" id="X14019">
    <property type="protein sequence ID" value="CAA32184.1"/>
    <property type="molecule type" value="mRNA"/>
</dbReference>
<dbReference type="PIR" id="S04684">
    <property type="entry name" value="R5PM9"/>
</dbReference>
<dbReference type="SMR" id="P11894"/>
<dbReference type="EnsemblPlants" id="Psat7g223760.1">
    <property type="protein sequence ID" value="Psat7g223760.1.cds"/>
    <property type="gene ID" value="Psat7g223760"/>
</dbReference>
<dbReference type="Gramene" id="Psat7g223760.1">
    <property type="protein sequence ID" value="Psat7g223760.1.cds"/>
    <property type="gene ID" value="Psat7g223760"/>
</dbReference>
<dbReference type="GO" id="GO:0009507">
    <property type="term" value="C:chloroplast"/>
    <property type="evidence" value="ECO:0007669"/>
    <property type="project" value="UniProtKB-SubCell"/>
</dbReference>
<dbReference type="GO" id="GO:1990904">
    <property type="term" value="C:ribonucleoprotein complex"/>
    <property type="evidence" value="ECO:0007669"/>
    <property type="project" value="UniProtKB-KW"/>
</dbReference>
<dbReference type="GO" id="GO:0005840">
    <property type="term" value="C:ribosome"/>
    <property type="evidence" value="ECO:0007669"/>
    <property type="project" value="UniProtKB-KW"/>
</dbReference>
<dbReference type="GO" id="GO:0019843">
    <property type="term" value="F:rRNA binding"/>
    <property type="evidence" value="ECO:0007669"/>
    <property type="project" value="UniProtKB-KW"/>
</dbReference>
<dbReference type="GO" id="GO:0003735">
    <property type="term" value="F:structural constituent of ribosome"/>
    <property type="evidence" value="ECO:0007669"/>
    <property type="project" value="InterPro"/>
</dbReference>
<dbReference type="GO" id="GO:0006412">
    <property type="term" value="P:translation"/>
    <property type="evidence" value="ECO:0007669"/>
    <property type="project" value="InterPro"/>
</dbReference>
<dbReference type="FunFam" id="3.10.430.100:FF:000005">
    <property type="entry name" value="50S ribosomal protein L9"/>
    <property type="match status" value="1"/>
</dbReference>
<dbReference type="FunFam" id="3.40.5.10:FF:000006">
    <property type="entry name" value="50S ribosomal protein L9, chloroplastic"/>
    <property type="match status" value="1"/>
</dbReference>
<dbReference type="Gene3D" id="3.10.430.100">
    <property type="entry name" value="Ribosomal protein L9, C-terminal domain"/>
    <property type="match status" value="1"/>
</dbReference>
<dbReference type="Gene3D" id="3.40.5.10">
    <property type="entry name" value="Ribosomal protein L9, N-terminal domain"/>
    <property type="match status" value="1"/>
</dbReference>
<dbReference type="HAMAP" id="MF_00503">
    <property type="entry name" value="Ribosomal_bL9"/>
    <property type="match status" value="1"/>
</dbReference>
<dbReference type="InterPro" id="IPR000244">
    <property type="entry name" value="Ribosomal_bL9"/>
</dbReference>
<dbReference type="InterPro" id="IPR009027">
    <property type="entry name" value="Ribosomal_bL9/RNase_H1_N"/>
</dbReference>
<dbReference type="InterPro" id="IPR020594">
    <property type="entry name" value="Ribosomal_bL9_bac/chp"/>
</dbReference>
<dbReference type="InterPro" id="IPR020069">
    <property type="entry name" value="Ribosomal_bL9_C"/>
</dbReference>
<dbReference type="InterPro" id="IPR036791">
    <property type="entry name" value="Ribosomal_bL9_C_sf"/>
</dbReference>
<dbReference type="InterPro" id="IPR020070">
    <property type="entry name" value="Ribosomal_bL9_N"/>
</dbReference>
<dbReference type="InterPro" id="IPR036935">
    <property type="entry name" value="Ribosomal_bL9_N_sf"/>
</dbReference>
<dbReference type="NCBIfam" id="TIGR00158">
    <property type="entry name" value="L9"/>
    <property type="match status" value="1"/>
</dbReference>
<dbReference type="PANTHER" id="PTHR21368">
    <property type="entry name" value="50S RIBOSOMAL PROTEIN L9"/>
    <property type="match status" value="1"/>
</dbReference>
<dbReference type="Pfam" id="PF03948">
    <property type="entry name" value="Ribosomal_L9_C"/>
    <property type="match status" value="1"/>
</dbReference>
<dbReference type="Pfam" id="PF01281">
    <property type="entry name" value="Ribosomal_L9_N"/>
    <property type="match status" value="1"/>
</dbReference>
<dbReference type="SUPFAM" id="SSF55658">
    <property type="entry name" value="L9 N-domain-like"/>
    <property type="match status" value="1"/>
</dbReference>
<dbReference type="SUPFAM" id="SSF55653">
    <property type="entry name" value="Ribosomal protein L9 C-domain"/>
    <property type="match status" value="1"/>
</dbReference>
<dbReference type="PROSITE" id="PS00651">
    <property type="entry name" value="RIBOSOMAL_L9"/>
    <property type="match status" value="1"/>
</dbReference>
<gene>
    <name type="primary">RPL9</name>
</gene>
<keyword id="KW-0150">Chloroplast</keyword>
<keyword id="KW-0934">Plastid</keyword>
<keyword id="KW-0687">Ribonucleoprotein</keyword>
<keyword id="KW-0689">Ribosomal protein</keyword>
<keyword id="KW-0694">RNA-binding</keyword>
<keyword id="KW-0699">rRNA-binding</keyword>
<keyword id="KW-0809">Transit peptide</keyword>
<reference key="1">
    <citation type="journal article" date="1988" name="Curr. Genet.">
        <title>Nucleotide sequences of cDNAs encoding four complete nuclear-encoded plastid ribosomal proteins.</title>
        <authorList>
            <person name="Gantt J.S."/>
        </authorList>
    </citation>
    <scope>NUCLEOTIDE SEQUENCE [MRNA]</scope>
    <source>
        <strain>cv. Little Marvel</strain>
        <tissue>Seedling</tissue>
    </source>
</reference>
<evidence type="ECO:0000250" key="1"/>
<evidence type="ECO:0000305" key="2"/>
<organism>
    <name type="scientific">Pisum sativum</name>
    <name type="common">Garden pea</name>
    <name type="synonym">Lathyrus oleraceus</name>
    <dbReference type="NCBI Taxonomy" id="3888"/>
    <lineage>
        <taxon>Eukaryota</taxon>
        <taxon>Viridiplantae</taxon>
        <taxon>Streptophyta</taxon>
        <taxon>Embryophyta</taxon>
        <taxon>Tracheophyta</taxon>
        <taxon>Spermatophyta</taxon>
        <taxon>Magnoliopsida</taxon>
        <taxon>eudicotyledons</taxon>
        <taxon>Gunneridae</taxon>
        <taxon>Pentapetalae</taxon>
        <taxon>rosids</taxon>
        <taxon>fabids</taxon>
        <taxon>Fabales</taxon>
        <taxon>Fabaceae</taxon>
        <taxon>Papilionoideae</taxon>
        <taxon>50 kb inversion clade</taxon>
        <taxon>NPAAA clade</taxon>
        <taxon>Hologalegina</taxon>
        <taxon>IRL clade</taxon>
        <taxon>Fabeae</taxon>
        <taxon>Pisum</taxon>
    </lineage>
</organism>
<proteinExistence type="evidence at transcript level"/>
<comment type="function">
    <text evidence="1">Binds to the 23S rRNA.</text>
</comment>
<comment type="subunit">
    <text>Part of the 50S ribosomal subunit.</text>
</comment>
<comment type="subcellular location">
    <subcellularLocation>
        <location>Plastid</location>
        <location>Chloroplast</location>
    </subcellularLocation>
</comment>
<comment type="similarity">
    <text evidence="2">Belongs to the bacterial ribosomal protein bL9 family.</text>
</comment>
<sequence>MASSTLSSLSSTPLQHSFAANLKTCSQFPNKSSGFMVFAQKKTKKTRKIILKEDIVNVGKKGELLDVRVGFFRNFLFPSGKAQLVTPGVLKEMKIEEERIEAEKRRVLEEAQQLALFFETFGAFKVKRKGGKGKQIFGSVTAQDLVDIIKAQLQREVDKRIVNLPEIRETGEYIAELKLHPDVTAKVRVNVIAN</sequence>